<sequence>MEMILITGMSGSGKSVALHALEDAGYYCVDNLPPELLSSFVALKRPHNAPKLAIAMDVRSATSLPLVPEQLRELKAQGMAVQSLFLDANTDTLVRRFSETRRLHPLSRIDATDQHRALVDAIELERNLLGDMREQAHVIDTSMIRAAQLQGYVKSLLQNPSRQLTLVFESFAFKRGVPLDADYVFDVRMLPNPHYEADLRHQTGLDQPVADFLKAHSEVDDMFRHIEQFLSHWLQALVRDHRSYVTVAVGCTGGQHRSVYLVEALAAAFGKDWPTLKRHRELEAG</sequence>
<accession>A1VKP5</accession>
<organism>
    <name type="scientific">Polaromonas naphthalenivorans (strain CJ2)</name>
    <dbReference type="NCBI Taxonomy" id="365044"/>
    <lineage>
        <taxon>Bacteria</taxon>
        <taxon>Pseudomonadati</taxon>
        <taxon>Pseudomonadota</taxon>
        <taxon>Betaproteobacteria</taxon>
        <taxon>Burkholderiales</taxon>
        <taxon>Comamonadaceae</taxon>
        <taxon>Polaromonas</taxon>
    </lineage>
</organism>
<reference key="1">
    <citation type="journal article" date="2009" name="Environ. Microbiol.">
        <title>The genome of Polaromonas naphthalenivorans strain CJ2, isolated from coal tar-contaminated sediment, reveals physiological and metabolic versatility and evolution through extensive horizontal gene transfer.</title>
        <authorList>
            <person name="Yagi J.M."/>
            <person name="Sims D."/>
            <person name="Brettin T."/>
            <person name="Bruce D."/>
            <person name="Madsen E.L."/>
        </authorList>
    </citation>
    <scope>NUCLEOTIDE SEQUENCE [LARGE SCALE GENOMIC DNA]</scope>
    <source>
        <strain>CJ2</strain>
    </source>
</reference>
<name>Y906_POLNA</name>
<dbReference type="EMBL" id="CP000529">
    <property type="protein sequence ID" value="ABM36223.1"/>
    <property type="molecule type" value="Genomic_DNA"/>
</dbReference>
<dbReference type="RefSeq" id="WP_011800317.1">
    <property type="nucleotide sequence ID" value="NC_008781.1"/>
</dbReference>
<dbReference type="SMR" id="A1VKP5"/>
<dbReference type="STRING" id="365044.Pnap_0906"/>
<dbReference type="KEGG" id="pna:Pnap_0906"/>
<dbReference type="eggNOG" id="COG1660">
    <property type="taxonomic scope" value="Bacteria"/>
</dbReference>
<dbReference type="HOGENOM" id="CLU_059558_1_1_4"/>
<dbReference type="OrthoDB" id="9784461at2"/>
<dbReference type="Proteomes" id="UP000000644">
    <property type="component" value="Chromosome"/>
</dbReference>
<dbReference type="GO" id="GO:0005524">
    <property type="term" value="F:ATP binding"/>
    <property type="evidence" value="ECO:0007669"/>
    <property type="project" value="UniProtKB-UniRule"/>
</dbReference>
<dbReference type="GO" id="GO:0005525">
    <property type="term" value="F:GTP binding"/>
    <property type="evidence" value="ECO:0007669"/>
    <property type="project" value="UniProtKB-UniRule"/>
</dbReference>
<dbReference type="HAMAP" id="MF_00636">
    <property type="entry name" value="RapZ_like"/>
    <property type="match status" value="1"/>
</dbReference>
<dbReference type="InterPro" id="IPR027417">
    <property type="entry name" value="P-loop_NTPase"/>
</dbReference>
<dbReference type="InterPro" id="IPR005337">
    <property type="entry name" value="RapZ-like"/>
</dbReference>
<dbReference type="InterPro" id="IPR053930">
    <property type="entry name" value="RapZ-like_N"/>
</dbReference>
<dbReference type="InterPro" id="IPR053931">
    <property type="entry name" value="RapZ_C"/>
</dbReference>
<dbReference type="NCBIfam" id="NF003828">
    <property type="entry name" value="PRK05416.1"/>
    <property type="match status" value="1"/>
</dbReference>
<dbReference type="PANTHER" id="PTHR30448">
    <property type="entry name" value="RNASE ADAPTER PROTEIN RAPZ"/>
    <property type="match status" value="1"/>
</dbReference>
<dbReference type="PANTHER" id="PTHR30448:SF0">
    <property type="entry name" value="RNASE ADAPTER PROTEIN RAPZ"/>
    <property type="match status" value="1"/>
</dbReference>
<dbReference type="Pfam" id="PF22740">
    <property type="entry name" value="PapZ_C"/>
    <property type="match status" value="1"/>
</dbReference>
<dbReference type="Pfam" id="PF03668">
    <property type="entry name" value="RapZ-like_N"/>
    <property type="match status" value="1"/>
</dbReference>
<dbReference type="PIRSF" id="PIRSF005052">
    <property type="entry name" value="P-loopkin"/>
    <property type="match status" value="1"/>
</dbReference>
<dbReference type="SUPFAM" id="SSF52540">
    <property type="entry name" value="P-loop containing nucleoside triphosphate hydrolases"/>
    <property type="match status" value="1"/>
</dbReference>
<proteinExistence type="inferred from homology"/>
<protein>
    <recommendedName>
        <fullName evidence="1">Nucleotide-binding protein Pnap_0906</fullName>
    </recommendedName>
</protein>
<gene>
    <name type="ordered locus">Pnap_0906</name>
</gene>
<feature type="chain" id="PRO_1000056842" description="Nucleotide-binding protein Pnap_0906">
    <location>
        <begin position="1"/>
        <end position="285"/>
    </location>
</feature>
<feature type="binding site" evidence="1">
    <location>
        <begin position="8"/>
        <end position="15"/>
    </location>
    <ligand>
        <name>ATP</name>
        <dbReference type="ChEBI" id="CHEBI:30616"/>
    </ligand>
</feature>
<feature type="binding site" evidence="1">
    <location>
        <begin position="57"/>
        <end position="60"/>
    </location>
    <ligand>
        <name>GTP</name>
        <dbReference type="ChEBI" id="CHEBI:37565"/>
    </ligand>
</feature>
<keyword id="KW-0067">ATP-binding</keyword>
<keyword id="KW-0342">GTP-binding</keyword>
<keyword id="KW-0547">Nucleotide-binding</keyword>
<keyword id="KW-1185">Reference proteome</keyword>
<comment type="function">
    <text evidence="1">Displays ATPase and GTPase activities.</text>
</comment>
<comment type="similarity">
    <text evidence="1">Belongs to the RapZ-like family.</text>
</comment>
<evidence type="ECO:0000255" key="1">
    <source>
        <dbReference type="HAMAP-Rule" id="MF_00636"/>
    </source>
</evidence>